<organism>
    <name type="scientific">Mus musculus</name>
    <name type="common">Mouse</name>
    <dbReference type="NCBI Taxonomy" id="10090"/>
    <lineage>
        <taxon>Eukaryota</taxon>
        <taxon>Metazoa</taxon>
        <taxon>Chordata</taxon>
        <taxon>Craniata</taxon>
        <taxon>Vertebrata</taxon>
        <taxon>Euteleostomi</taxon>
        <taxon>Mammalia</taxon>
        <taxon>Eutheria</taxon>
        <taxon>Euarchontoglires</taxon>
        <taxon>Glires</taxon>
        <taxon>Rodentia</taxon>
        <taxon>Myomorpha</taxon>
        <taxon>Muroidea</taxon>
        <taxon>Muridae</taxon>
        <taxon>Murinae</taxon>
        <taxon>Mus</taxon>
        <taxon>Mus</taxon>
    </lineage>
</organism>
<proteinExistence type="evidence at protein level"/>
<keyword id="KW-0472">Membrane</keyword>
<keyword id="KW-0496">Mitochondrion</keyword>
<keyword id="KW-0999">Mitochondrion inner membrane</keyword>
<keyword id="KW-1185">Reference proteome</keyword>
<keyword id="KW-0809">Transit peptide</keyword>
<keyword id="KW-0812">Transmembrane</keyword>
<keyword id="KW-1133">Transmembrane helix</keyword>
<accession>Q7TNU7</accession>
<reference key="1">
    <citation type="journal article" date="2004" name="Genome Res.">
        <title>The status, quality, and expansion of the NIH full-length cDNA project: the Mammalian Gene Collection (MGC).</title>
        <authorList>
            <consortium name="The MGC Project Team"/>
        </authorList>
    </citation>
    <scope>NUCLEOTIDE SEQUENCE [LARGE SCALE MRNA]</scope>
    <source>
        <strain>C57BL/6J</strain>
        <tissue>Brain</tissue>
    </source>
</reference>
<reference key="2">
    <citation type="journal article" date="2010" name="Cell">
        <title>A tissue-specific atlas of mouse protein phosphorylation and expression.</title>
        <authorList>
            <person name="Huttlin E.L."/>
            <person name="Jedrychowski M.P."/>
            <person name="Elias J.E."/>
            <person name="Goswami T."/>
            <person name="Rad R."/>
            <person name="Beausoleil S.A."/>
            <person name="Villen J."/>
            <person name="Haas W."/>
            <person name="Sowa M.E."/>
            <person name="Gygi S.P."/>
        </authorList>
    </citation>
    <scope>IDENTIFICATION BY MASS SPECTROMETRY [LARGE SCALE ANALYSIS]</scope>
    <source>
        <tissue>Testis</tissue>
    </source>
</reference>
<protein>
    <recommendedName>
        <fullName>LETM1 domain-containing protein LETM2, mitochondrial</fullName>
    </recommendedName>
    <alternativeName>
        <fullName>LETM1 and EF-hand domain-containing protein 2</fullName>
    </alternativeName>
    <alternativeName>
        <fullName>Leucine zipper-EF-hand-containing transmembrane protein 1-like</fullName>
    </alternativeName>
</protein>
<comment type="subcellular location">
    <subcellularLocation>
        <location evidence="1">Mitochondrion inner membrane</location>
        <topology evidence="1">Single-pass membrane protein</topology>
    </subcellularLocation>
</comment>
<comment type="caution">
    <text evidence="5">Despite its name, it does not contain any EF-hand domains.</text>
</comment>
<gene>
    <name type="primary">Letm2</name>
</gene>
<name>LETM2_MOUSE</name>
<feature type="transit peptide" description="Mitochondrion" evidence="2">
    <location>
        <begin position="1"/>
        <end position="25"/>
    </location>
</feature>
<feature type="chain" id="PRO_0000307138" description="LETM1 domain-containing protein LETM2, mitochondrial">
    <location>
        <begin position="26"/>
        <end position="480"/>
    </location>
</feature>
<feature type="topological domain" description="Mitochondrial intermembrane" evidence="2">
    <location>
        <begin position="26"/>
        <end position="175"/>
    </location>
</feature>
<feature type="transmembrane region" description="Helical" evidence="2">
    <location>
        <begin position="176"/>
        <end position="196"/>
    </location>
</feature>
<feature type="topological domain" description="Mitochondrial matrix" evidence="2">
    <location>
        <begin position="197"/>
        <end position="480"/>
    </location>
</feature>
<feature type="domain" description="Letm1 RBD" evidence="3">
    <location>
        <begin position="219"/>
        <end position="436"/>
    </location>
</feature>
<feature type="region of interest" description="Disordered" evidence="4">
    <location>
        <begin position="88"/>
        <end position="118"/>
    </location>
</feature>
<feature type="region of interest" description="Disordered" evidence="4">
    <location>
        <begin position="398"/>
        <end position="444"/>
    </location>
</feature>
<feature type="compositionally biased region" description="Basic and acidic residues" evidence="4">
    <location>
        <begin position="107"/>
        <end position="118"/>
    </location>
</feature>
<evidence type="ECO:0000250" key="1"/>
<evidence type="ECO:0000255" key="2"/>
<evidence type="ECO:0000255" key="3">
    <source>
        <dbReference type="PROSITE-ProRule" id="PRU01094"/>
    </source>
</evidence>
<evidence type="ECO:0000256" key="4">
    <source>
        <dbReference type="SAM" id="MobiDB-lite"/>
    </source>
</evidence>
<evidence type="ECO:0000305" key="5"/>
<sequence length="480" mass="54458">MAFYSYNSFLAIFWTRLPGHSVYPSCSHFPSLAFLHLPDSHLRTAYIKNCGSRKYSYPSLTGNNKVHPLRTRLPQKLHTTCWLQHVPGKPQLEQTGKPKAASPQPTKEAKTETTEEKRSLRQKIVNELKYYYKGFSLLWIDTKVAARIVWRLLHGNALTRRERRRLLRTCADVFRLVPFMVFIIVPFMEFLIPVFLKLFPDMLPSTFESESKKEEKQKKTMAAKLEIAKFLQETMTEMARRNRAKLGDASSQLSSYVKQVQTGHKPSTKEIVRFSKLFKDQLALEHLDRPQLVALCKLLELQTFGTNNLLRFQLLMTLKSIKADDEIIAKEGVKALSVSELQSACRARGMRSLGLTEEQLCQQLTGWLDLHLKENVPPSLLLLSRTFYLIDVKPKPIELPPNIETPKPNLGIPTPPPPESKENLTDSAPQLKGTKDEEFIQLPPVPSSLIAPAATISKEAILQAKSQETSQNSKADSKGA</sequence>
<dbReference type="EMBL" id="BC055685">
    <property type="protein sequence ID" value="AAH55685.1"/>
    <property type="molecule type" value="mRNA"/>
</dbReference>
<dbReference type="CCDS" id="CCDS52527.1"/>
<dbReference type="RefSeq" id="NP_001350998.1">
    <property type="nucleotide sequence ID" value="NM_001364069.1"/>
</dbReference>
<dbReference type="RefSeq" id="NP_766600.2">
    <property type="nucleotide sequence ID" value="NM_173012.3"/>
</dbReference>
<dbReference type="RefSeq" id="XP_006509190.1">
    <property type="nucleotide sequence ID" value="XM_006509127.4"/>
</dbReference>
<dbReference type="RefSeq" id="XP_017168331.1">
    <property type="nucleotide sequence ID" value="XM_017312842.1"/>
</dbReference>
<dbReference type="SMR" id="Q7TNU7"/>
<dbReference type="FunCoup" id="Q7TNU7">
    <property type="interactions" value="727"/>
</dbReference>
<dbReference type="STRING" id="10090.ENSMUSP00000078160"/>
<dbReference type="GlyGen" id="Q7TNU7">
    <property type="glycosylation" value="1 site, 1 O-linked glycan (1 site)"/>
</dbReference>
<dbReference type="iPTMnet" id="Q7TNU7"/>
<dbReference type="PhosphoSitePlus" id="Q7TNU7"/>
<dbReference type="SwissPalm" id="Q7TNU7"/>
<dbReference type="jPOST" id="Q7TNU7"/>
<dbReference type="PaxDb" id="10090-ENSMUSP00000078160"/>
<dbReference type="PeptideAtlas" id="Q7TNU7"/>
<dbReference type="ProteomicsDB" id="290021"/>
<dbReference type="Antibodypedia" id="11001">
    <property type="antibodies" value="105 antibodies from 22 providers"/>
</dbReference>
<dbReference type="DNASU" id="270035"/>
<dbReference type="Ensembl" id="ENSMUST00000079160.8">
    <property type="protein sequence ID" value="ENSMUSP00000078160.7"/>
    <property type="gene ID" value="ENSMUSG00000037363.10"/>
</dbReference>
<dbReference type="GeneID" id="270035"/>
<dbReference type="KEGG" id="mmu:270035"/>
<dbReference type="UCSC" id="uc009lgf.2">
    <property type="organism name" value="mouse"/>
</dbReference>
<dbReference type="AGR" id="MGI:2444979"/>
<dbReference type="CTD" id="137994"/>
<dbReference type="MGI" id="MGI:2444979">
    <property type="gene designation" value="Letm2"/>
</dbReference>
<dbReference type="VEuPathDB" id="HostDB:ENSMUSG00000037363"/>
<dbReference type="eggNOG" id="KOG1043">
    <property type="taxonomic scope" value="Eukaryota"/>
</dbReference>
<dbReference type="GeneTree" id="ENSGT00950000183167"/>
<dbReference type="HOGENOM" id="CLU_008958_0_0_1"/>
<dbReference type="InParanoid" id="Q7TNU7"/>
<dbReference type="OMA" id="MAACGCN"/>
<dbReference type="OrthoDB" id="624114at2759"/>
<dbReference type="PhylomeDB" id="Q7TNU7"/>
<dbReference type="TreeFam" id="TF316321"/>
<dbReference type="BioGRID-ORCS" id="270035">
    <property type="hits" value="2 hits in 78 CRISPR screens"/>
</dbReference>
<dbReference type="ChiTaRS" id="Letm2">
    <property type="organism name" value="mouse"/>
</dbReference>
<dbReference type="PRO" id="PR:Q7TNU7"/>
<dbReference type="Proteomes" id="UP000000589">
    <property type="component" value="Chromosome 8"/>
</dbReference>
<dbReference type="RNAct" id="Q7TNU7">
    <property type="molecule type" value="protein"/>
</dbReference>
<dbReference type="Bgee" id="ENSMUSG00000037363">
    <property type="expression patterns" value="Expressed in spermatid and 202 other cell types or tissues"/>
</dbReference>
<dbReference type="ExpressionAtlas" id="Q7TNU7">
    <property type="expression patterns" value="baseline and differential"/>
</dbReference>
<dbReference type="GO" id="GO:0005743">
    <property type="term" value="C:mitochondrial inner membrane"/>
    <property type="evidence" value="ECO:0007669"/>
    <property type="project" value="UniProtKB-SubCell"/>
</dbReference>
<dbReference type="GO" id="GO:0043022">
    <property type="term" value="F:ribosome binding"/>
    <property type="evidence" value="ECO:0007669"/>
    <property type="project" value="InterPro"/>
</dbReference>
<dbReference type="InterPro" id="IPR033122">
    <property type="entry name" value="LETM1-like_RBD"/>
</dbReference>
<dbReference type="InterPro" id="IPR044202">
    <property type="entry name" value="LETM1/MDM38-like"/>
</dbReference>
<dbReference type="InterPro" id="IPR045742">
    <property type="entry name" value="LETM2_N"/>
</dbReference>
<dbReference type="PANTHER" id="PTHR14009:SF7">
    <property type="entry name" value="LETM1 DOMAIN-CONTAINING PROTEIN LETM2, MITOCHONDRIAL"/>
    <property type="match status" value="1"/>
</dbReference>
<dbReference type="PANTHER" id="PTHR14009">
    <property type="entry name" value="LEUCINE ZIPPER-EF-HAND CONTAINING TRANSMEMBRANE PROTEIN"/>
    <property type="match status" value="1"/>
</dbReference>
<dbReference type="Pfam" id="PF07766">
    <property type="entry name" value="LETM1_RBD"/>
    <property type="match status" value="1"/>
</dbReference>
<dbReference type="Pfam" id="PF19324">
    <property type="entry name" value="LETM2_N"/>
    <property type="match status" value="1"/>
</dbReference>
<dbReference type="PROSITE" id="PS51758">
    <property type="entry name" value="LETM1_RBD"/>
    <property type="match status" value="1"/>
</dbReference>